<dbReference type="EMBL" id="CU928160">
    <property type="protein sequence ID" value="CAR00907.1"/>
    <property type="molecule type" value="Genomic_DNA"/>
</dbReference>
<dbReference type="RefSeq" id="WP_001293343.1">
    <property type="nucleotide sequence ID" value="NC_011741.1"/>
</dbReference>
<dbReference type="SMR" id="B7M6Y2"/>
<dbReference type="GeneID" id="86944460"/>
<dbReference type="KEGG" id="ecr:ECIAI1_4136"/>
<dbReference type="HOGENOM" id="CLU_033123_0_0_6"/>
<dbReference type="GO" id="GO:0009376">
    <property type="term" value="C:HslUV protease complex"/>
    <property type="evidence" value="ECO:0007669"/>
    <property type="project" value="UniProtKB-UniRule"/>
</dbReference>
<dbReference type="GO" id="GO:0005524">
    <property type="term" value="F:ATP binding"/>
    <property type="evidence" value="ECO:0007669"/>
    <property type="project" value="UniProtKB-UniRule"/>
</dbReference>
<dbReference type="GO" id="GO:0016887">
    <property type="term" value="F:ATP hydrolysis activity"/>
    <property type="evidence" value="ECO:0007669"/>
    <property type="project" value="InterPro"/>
</dbReference>
<dbReference type="GO" id="GO:0008233">
    <property type="term" value="F:peptidase activity"/>
    <property type="evidence" value="ECO:0007669"/>
    <property type="project" value="InterPro"/>
</dbReference>
<dbReference type="GO" id="GO:0036402">
    <property type="term" value="F:proteasome-activating activity"/>
    <property type="evidence" value="ECO:0007669"/>
    <property type="project" value="UniProtKB-UniRule"/>
</dbReference>
<dbReference type="GO" id="GO:0043335">
    <property type="term" value="P:protein unfolding"/>
    <property type="evidence" value="ECO:0007669"/>
    <property type="project" value="UniProtKB-UniRule"/>
</dbReference>
<dbReference type="GO" id="GO:0051603">
    <property type="term" value="P:proteolysis involved in protein catabolic process"/>
    <property type="evidence" value="ECO:0007669"/>
    <property type="project" value="TreeGrafter"/>
</dbReference>
<dbReference type="CDD" id="cd19498">
    <property type="entry name" value="RecA-like_HslU"/>
    <property type="match status" value="1"/>
</dbReference>
<dbReference type="FunFam" id="1.10.8.10:FF:000012">
    <property type="entry name" value="ATP-dependent protease ATPase subunit HslU"/>
    <property type="match status" value="1"/>
</dbReference>
<dbReference type="FunFam" id="1.10.8.10:FF:000028">
    <property type="entry name" value="ATP-dependent protease ATPase subunit HslU"/>
    <property type="match status" value="1"/>
</dbReference>
<dbReference type="FunFam" id="1.10.8.60:FF:000027">
    <property type="entry name" value="ATP-dependent protease ATPase subunit HslU"/>
    <property type="match status" value="1"/>
</dbReference>
<dbReference type="FunFam" id="3.40.50.300:FF:000213">
    <property type="entry name" value="ATP-dependent protease ATPase subunit HslU"/>
    <property type="match status" value="1"/>
</dbReference>
<dbReference type="FunFam" id="3.40.50.300:FF:000220">
    <property type="entry name" value="ATP-dependent protease ATPase subunit HslU"/>
    <property type="match status" value="1"/>
</dbReference>
<dbReference type="Gene3D" id="1.10.8.60">
    <property type="match status" value="1"/>
</dbReference>
<dbReference type="Gene3D" id="1.10.8.10">
    <property type="entry name" value="DNA helicase RuvA subunit, C-terminal domain"/>
    <property type="match status" value="2"/>
</dbReference>
<dbReference type="Gene3D" id="3.40.50.300">
    <property type="entry name" value="P-loop containing nucleotide triphosphate hydrolases"/>
    <property type="match status" value="1"/>
</dbReference>
<dbReference type="HAMAP" id="MF_00249">
    <property type="entry name" value="HslU"/>
    <property type="match status" value="1"/>
</dbReference>
<dbReference type="InterPro" id="IPR003593">
    <property type="entry name" value="AAA+_ATPase"/>
</dbReference>
<dbReference type="InterPro" id="IPR050052">
    <property type="entry name" value="ATP-dep_Clp_protease_ClpX"/>
</dbReference>
<dbReference type="InterPro" id="IPR003959">
    <property type="entry name" value="ATPase_AAA_core"/>
</dbReference>
<dbReference type="InterPro" id="IPR019489">
    <property type="entry name" value="Clp_ATPase_C"/>
</dbReference>
<dbReference type="InterPro" id="IPR004491">
    <property type="entry name" value="HslU"/>
</dbReference>
<dbReference type="InterPro" id="IPR027417">
    <property type="entry name" value="P-loop_NTPase"/>
</dbReference>
<dbReference type="NCBIfam" id="TIGR00390">
    <property type="entry name" value="hslU"/>
    <property type="match status" value="1"/>
</dbReference>
<dbReference type="NCBIfam" id="NF003544">
    <property type="entry name" value="PRK05201.1"/>
    <property type="match status" value="1"/>
</dbReference>
<dbReference type="PANTHER" id="PTHR48102">
    <property type="entry name" value="ATP-DEPENDENT CLP PROTEASE ATP-BINDING SUBUNIT CLPX-LIKE, MITOCHONDRIAL-RELATED"/>
    <property type="match status" value="1"/>
</dbReference>
<dbReference type="PANTHER" id="PTHR48102:SF3">
    <property type="entry name" value="ATP-DEPENDENT PROTEASE ATPASE SUBUNIT HSLU"/>
    <property type="match status" value="1"/>
</dbReference>
<dbReference type="Pfam" id="PF00004">
    <property type="entry name" value="AAA"/>
    <property type="match status" value="1"/>
</dbReference>
<dbReference type="Pfam" id="PF07724">
    <property type="entry name" value="AAA_2"/>
    <property type="match status" value="1"/>
</dbReference>
<dbReference type="SMART" id="SM00382">
    <property type="entry name" value="AAA"/>
    <property type="match status" value="1"/>
</dbReference>
<dbReference type="SMART" id="SM01086">
    <property type="entry name" value="ClpB_D2-small"/>
    <property type="match status" value="1"/>
</dbReference>
<dbReference type="SUPFAM" id="SSF52540">
    <property type="entry name" value="P-loop containing nucleoside triphosphate hydrolases"/>
    <property type="match status" value="1"/>
</dbReference>
<feature type="chain" id="PRO_1000119104" description="ATP-dependent protease ATPase subunit HslU">
    <location>
        <begin position="1"/>
        <end position="443"/>
    </location>
</feature>
<feature type="binding site" evidence="1">
    <location>
        <position position="18"/>
    </location>
    <ligand>
        <name>ATP</name>
        <dbReference type="ChEBI" id="CHEBI:30616"/>
    </ligand>
</feature>
<feature type="binding site" evidence="1">
    <location>
        <begin position="60"/>
        <end position="65"/>
    </location>
    <ligand>
        <name>ATP</name>
        <dbReference type="ChEBI" id="CHEBI:30616"/>
    </ligand>
</feature>
<feature type="binding site" evidence="1">
    <location>
        <position position="256"/>
    </location>
    <ligand>
        <name>ATP</name>
        <dbReference type="ChEBI" id="CHEBI:30616"/>
    </ligand>
</feature>
<feature type="binding site" evidence="1">
    <location>
        <position position="321"/>
    </location>
    <ligand>
        <name>ATP</name>
        <dbReference type="ChEBI" id="CHEBI:30616"/>
    </ligand>
</feature>
<feature type="binding site" evidence="1">
    <location>
        <position position="393"/>
    </location>
    <ligand>
        <name>ATP</name>
        <dbReference type="ChEBI" id="CHEBI:30616"/>
    </ligand>
</feature>
<reference key="1">
    <citation type="journal article" date="2009" name="PLoS Genet.">
        <title>Organised genome dynamics in the Escherichia coli species results in highly diverse adaptive paths.</title>
        <authorList>
            <person name="Touchon M."/>
            <person name="Hoede C."/>
            <person name="Tenaillon O."/>
            <person name="Barbe V."/>
            <person name="Baeriswyl S."/>
            <person name="Bidet P."/>
            <person name="Bingen E."/>
            <person name="Bonacorsi S."/>
            <person name="Bouchier C."/>
            <person name="Bouvet O."/>
            <person name="Calteau A."/>
            <person name="Chiapello H."/>
            <person name="Clermont O."/>
            <person name="Cruveiller S."/>
            <person name="Danchin A."/>
            <person name="Diard M."/>
            <person name="Dossat C."/>
            <person name="Karoui M.E."/>
            <person name="Frapy E."/>
            <person name="Garry L."/>
            <person name="Ghigo J.M."/>
            <person name="Gilles A.M."/>
            <person name="Johnson J."/>
            <person name="Le Bouguenec C."/>
            <person name="Lescat M."/>
            <person name="Mangenot S."/>
            <person name="Martinez-Jehanne V."/>
            <person name="Matic I."/>
            <person name="Nassif X."/>
            <person name="Oztas S."/>
            <person name="Petit M.A."/>
            <person name="Pichon C."/>
            <person name="Rouy Z."/>
            <person name="Ruf C.S."/>
            <person name="Schneider D."/>
            <person name="Tourret J."/>
            <person name="Vacherie B."/>
            <person name="Vallenet D."/>
            <person name="Medigue C."/>
            <person name="Rocha E.P.C."/>
            <person name="Denamur E."/>
        </authorList>
    </citation>
    <scope>NUCLEOTIDE SEQUENCE [LARGE SCALE GENOMIC DNA]</scope>
    <source>
        <strain>IAI1</strain>
    </source>
</reference>
<comment type="function">
    <text evidence="1">ATPase subunit of a proteasome-like degradation complex; this subunit has chaperone activity. The binding of ATP and its subsequent hydrolysis by HslU are essential for unfolding of protein substrates subsequently hydrolyzed by HslV. HslU recognizes the N-terminal part of its protein substrates and unfolds these before they are guided to HslV for hydrolysis.</text>
</comment>
<comment type="subunit">
    <text evidence="1">A double ring-shaped homohexamer of HslV is capped on each side by a ring-shaped HslU homohexamer. The assembly of the HslU/HslV complex is dependent on binding of ATP.</text>
</comment>
<comment type="subcellular location">
    <subcellularLocation>
        <location evidence="1">Cytoplasm</location>
    </subcellularLocation>
</comment>
<comment type="induction">
    <text evidence="1">By heat shock.</text>
</comment>
<comment type="similarity">
    <text evidence="1">Belongs to the ClpX chaperone family. HslU subfamily.</text>
</comment>
<accession>B7M6Y2</accession>
<evidence type="ECO:0000255" key="1">
    <source>
        <dbReference type="HAMAP-Rule" id="MF_00249"/>
    </source>
</evidence>
<protein>
    <recommendedName>
        <fullName evidence="1">ATP-dependent protease ATPase subunit HslU</fullName>
    </recommendedName>
    <alternativeName>
        <fullName evidence="1">Heat shock protein HslU</fullName>
    </alternativeName>
    <alternativeName>
        <fullName evidence="1">Unfoldase HslU</fullName>
    </alternativeName>
</protein>
<gene>
    <name evidence="1" type="primary">hslU</name>
    <name type="ordered locus">ECIAI1_4136</name>
</gene>
<sequence length="443" mass="49593">MSEMTPREIVSELDKHIIGQDNAKRSVAIALRNRWRRMQLNEELRHEVTPKNILMIGPTGVGKTEIARRLAKLANAPFIKVEATKFTEVGYVGKEVDSIIRDLTDAAVKMVRVQAIEKNRYRAEELAEERILDVLIPPAKNNWGQTEQQQEPSAARQAFRKKLREGQLDDKEIEIDLAAAPMGVEIMAPPGMEEMTSQLQSMFQNLGGQKQKARKLKIKDAMKLLIEEEAAKLVNPEELKQDAIDAVEQHGIVFIDEIDKICKRGESSGPDVSREGVQRDLLPLVEGCTVSTKHGMVKTDHILFIASGAFQIAKPSDLIPELQGRLPIRVELQALTTSDFERILTEPNASITVQYKALMATEGVNIEFTDSGIKRIAEAAWQVNESTENIGARRLHTVLERLMEEISYDASDLSGQTIIIDADYVSKHLDALVADEDLSRFIL</sequence>
<proteinExistence type="inferred from homology"/>
<organism>
    <name type="scientific">Escherichia coli O8 (strain IAI1)</name>
    <dbReference type="NCBI Taxonomy" id="585034"/>
    <lineage>
        <taxon>Bacteria</taxon>
        <taxon>Pseudomonadati</taxon>
        <taxon>Pseudomonadota</taxon>
        <taxon>Gammaproteobacteria</taxon>
        <taxon>Enterobacterales</taxon>
        <taxon>Enterobacteriaceae</taxon>
        <taxon>Escherichia</taxon>
    </lineage>
</organism>
<keyword id="KW-0067">ATP-binding</keyword>
<keyword id="KW-0143">Chaperone</keyword>
<keyword id="KW-0963">Cytoplasm</keyword>
<keyword id="KW-0547">Nucleotide-binding</keyword>
<keyword id="KW-0346">Stress response</keyword>
<name>HSLU_ECO8A</name>